<proteinExistence type="inferred from homology"/>
<reference key="1">
    <citation type="journal article" date="2005" name="Nature">
        <title>The genome of the social amoeba Dictyostelium discoideum.</title>
        <authorList>
            <person name="Eichinger L."/>
            <person name="Pachebat J.A."/>
            <person name="Gloeckner G."/>
            <person name="Rajandream M.A."/>
            <person name="Sucgang R."/>
            <person name="Berriman M."/>
            <person name="Song J."/>
            <person name="Olsen R."/>
            <person name="Szafranski K."/>
            <person name="Xu Q."/>
            <person name="Tunggal B."/>
            <person name="Kummerfeld S."/>
            <person name="Madera M."/>
            <person name="Konfortov B.A."/>
            <person name="Rivero F."/>
            <person name="Bankier A.T."/>
            <person name="Lehmann R."/>
            <person name="Hamlin N."/>
            <person name="Davies R."/>
            <person name="Gaudet P."/>
            <person name="Fey P."/>
            <person name="Pilcher K."/>
            <person name="Chen G."/>
            <person name="Saunders D."/>
            <person name="Sodergren E.J."/>
            <person name="Davis P."/>
            <person name="Kerhornou A."/>
            <person name="Nie X."/>
            <person name="Hall N."/>
            <person name="Anjard C."/>
            <person name="Hemphill L."/>
            <person name="Bason N."/>
            <person name="Farbrother P."/>
            <person name="Desany B."/>
            <person name="Just E."/>
            <person name="Morio T."/>
            <person name="Rost R."/>
            <person name="Churcher C.M."/>
            <person name="Cooper J."/>
            <person name="Haydock S."/>
            <person name="van Driessche N."/>
            <person name="Cronin A."/>
            <person name="Goodhead I."/>
            <person name="Muzny D.M."/>
            <person name="Mourier T."/>
            <person name="Pain A."/>
            <person name="Lu M."/>
            <person name="Harper D."/>
            <person name="Lindsay R."/>
            <person name="Hauser H."/>
            <person name="James K.D."/>
            <person name="Quiles M."/>
            <person name="Madan Babu M."/>
            <person name="Saito T."/>
            <person name="Buchrieser C."/>
            <person name="Wardroper A."/>
            <person name="Felder M."/>
            <person name="Thangavelu M."/>
            <person name="Johnson D."/>
            <person name="Knights A."/>
            <person name="Loulseged H."/>
            <person name="Mungall K.L."/>
            <person name="Oliver K."/>
            <person name="Price C."/>
            <person name="Quail M.A."/>
            <person name="Urushihara H."/>
            <person name="Hernandez J."/>
            <person name="Rabbinowitsch E."/>
            <person name="Steffen D."/>
            <person name="Sanders M."/>
            <person name="Ma J."/>
            <person name="Kohara Y."/>
            <person name="Sharp S."/>
            <person name="Simmonds M.N."/>
            <person name="Spiegler S."/>
            <person name="Tivey A."/>
            <person name="Sugano S."/>
            <person name="White B."/>
            <person name="Walker D."/>
            <person name="Woodward J.R."/>
            <person name="Winckler T."/>
            <person name="Tanaka Y."/>
            <person name="Shaulsky G."/>
            <person name="Schleicher M."/>
            <person name="Weinstock G.M."/>
            <person name="Rosenthal A."/>
            <person name="Cox E.C."/>
            <person name="Chisholm R.L."/>
            <person name="Gibbs R.A."/>
            <person name="Loomis W.F."/>
            <person name="Platzer M."/>
            <person name="Kay R.R."/>
            <person name="Williams J.G."/>
            <person name="Dear P.H."/>
            <person name="Noegel A.A."/>
            <person name="Barrell B.G."/>
            <person name="Kuspa A."/>
        </authorList>
    </citation>
    <scope>NUCLEOTIDE SEQUENCE [LARGE SCALE GENOMIC DNA]</scope>
    <source>
        <strain>AX4</strain>
    </source>
</reference>
<accession>Q1ZXC5</accession>
<protein>
    <recommendedName>
        <fullName>Protein psiC</fullName>
    </recommendedName>
</protein>
<organism>
    <name type="scientific">Dictyostelium discoideum</name>
    <name type="common">Social amoeba</name>
    <dbReference type="NCBI Taxonomy" id="44689"/>
    <lineage>
        <taxon>Eukaryota</taxon>
        <taxon>Amoebozoa</taxon>
        <taxon>Evosea</taxon>
        <taxon>Eumycetozoa</taxon>
        <taxon>Dictyostelia</taxon>
        <taxon>Dictyosteliales</taxon>
        <taxon>Dictyosteliaceae</taxon>
        <taxon>Dictyostelium</taxon>
    </lineage>
</organism>
<keyword id="KW-0325">Glycoprotein</keyword>
<keyword id="KW-1185">Reference proteome</keyword>
<keyword id="KW-0964">Secreted</keyword>
<keyword id="KW-0732">Signal</keyword>
<evidence type="ECO:0000255" key="1"/>
<evidence type="ECO:0000255" key="2">
    <source>
        <dbReference type="PROSITE-ProRule" id="PRU01164"/>
    </source>
</evidence>
<evidence type="ECO:0000256" key="3">
    <source>
        <dbReference type="SAM" id="MobiDB-lite"/>
    </source>
</evidence>
<evidence type="ECO:0000305" key="4"/>
<name>PSIC_DICDI</name>
<comment type="subcellular location">
    <subcellularLocation>
        <location evidence="4">Secreted</location>
    </subcellularLocation>
</comment>
<comment type="similarity">
    <text evidence="4">Belongs to the prespore-cell-inducing factor family.</text>
</comment>
<gene>
    <name type="primary">psiC</name>
    <name type="ORF">DDB_G0290245</name>
</gene>
<dbReference type="EMBL" id="AAFI02000161">
    <property type="protein sequence ID" value="EAS66830.1"/>
    <property type="molecule type" value="Genomic_DNA"/>
</dbReference>
<dbReference type="RefSeq" id="XP_001134513.1">
    <property type="nucleotide sequence ID" value="XM_001134513.1"/>
</dbReference>
<dbReference type="FunCoup" id="Q1ZXC5">
    <property type="interactions" value="16"/>
</dbReference>
<dbReference type="GlyCosmos" id="Q1ZXC5">
    <property type="glycosylation" value="7 sites, No reported glycans"/>
</dbReference>
<dbReference type="GlyGen" id="Q1ZXC5">
    <property type="glycosylation" value="7 sites"/>
</dbReference>
<dbReference type="PaxDb" id="44689-DDB0231655"/>
<dbReference type="EnsemblProtists" id="EAS66830">
    <property type="protein sequence ID" value="EAS66830"/>
    <property type="gene ID" value="DDB_G0290245"/>
</dbReference>
<dbReference type="GeneID" id="8627528"/>
<dbReference type="KEGG" id="ddi:DDB_G0290245"/>
<dbReference type="dictyBase" id="DDB_G0290245">
    <property type="gene designation" value="psiC"/>
</dbReference>
<dbReference type="VEuPathDB" id="AmoebaDB:DDB_G0290245"/>
<dbReference type="eggNOG" id="ENOG502R58P">
    <property type="taxonomic scope" value="Eukaryota"/>
</dbReference>
<dbReference type="HOGENOM" id="CLU_528332_0_0_1"/>
<dbReference type="InParanoid" id="Q1ZXC5"/>
<dbReference type="OMA" id="WICGSED"/>
<dbReference type="PhylomeDB" id="Q1ZXC5"/>
<dbReference type="PRO" id="PR:Q1ZXC5"/>
<dbReference type="Proteomes" id="UP000002195">
    <property type="component" value="Chromosome 5"/>
</dbReference>
<dbReference type="GO" id="GO:0005576">
    <property type="term" value="C:extracellular region"/>
    <property type="evidence" value="ECO:0000318"/>
    <property type="project" value="GO_Central"/>
</dbReference>
<dbReference type="InterPro" id="IPR011874">
    <property type="entry name" value="Fibro_Slime"/>
</dbReference>
<dbReference type="InterPro" id="IPR037524">
    <property type="entry name" value="PA14/GLEYA"/>
</dbReference>
<dbReference type="InterPro" id="IPR011658">
    <property type="entry name" value="PA14_dom"/>
</dbReference>
<dbReference type="InterPro" id="IPR051154">
    <property type="entry name" value="Prespore-cell_inducing_factor"/>
</dbReference>
<dbReference type="InterPro" id="IPR001673">
    <property type="entry name" value="S_mold_repeat"/>
</dbReference>
<dbReference type="NCBIfam" id="TIGR02148">
    <property type="entry name" value="Fibro_Slime"/>
    <property type="match status" value="1"/>
</dbReference>
<dbReference type="PANTHER" id="PTHR31137">
    <property type="entry name" value="PROTEIN PSIB-RELATED-RELATED"/>
    <property type="match status" value="1"/>
</dbReference>
<dbReference type="PANTHER" id="PTHR31137:SF6">
    <property type="entry name" value="PROTEIN PSIC"/>
    <property type="match status" value="1"/>
</dbReference>
<dbReference type="Pfam" id="PF00526">
    <property type="entry name" value="Dicty_CTDC"/>
    <property type="match status" value="1"/>
</dbReference>
<dbReference type="Pfam" id="PF07691">
    <property type="entry name" value="PA14"/>
    <property type="match status" value="1"/>
</dbReference>
<dbReference type="SMART" id="SM00758">
    <property type="entry name" value="PA14"/>
    <property type="match status" value="1"/>
</dbReference>
<dbReference type="PROSITE" id="PS51820">
    <property type="entry name" value="PA14"/>
    <property type="match status" value="1"/>
</dbReference>
<feature type="signal peptide" evidence="1">
    <location>
        <begin position="1"/>
        <end position="19"/>
    </location>
</feature>
<feature type="chain" id="PRO_0000327556" description="Protein psiC">
    <location>
        <begin position="20"/>
        <end position="516"/>
    </location>
</feature>
<feature type="domain" description="PA14" evidence="2">
    <location>
        <begin position="109"/>
        <end position="249"/>
    </location>
</feature>
<feature type="region of interest" description="Disordered" evidence="3">
    <location>
        <begin position="418"/>
        <end position="465"/>
    </location>
</feature>
<feature type="compositionally biased region" description="Low complexity" evidence="3">
    <location>
        <begin position="418"/>
        <end position="427"/>
    </location>
</feature>
<feature type="compositionally biased region" description="Pro residues" evidence="3">
    <location>
        <begin position="449"/>
        <end position="460"/>
    </location>
</feature>
<feature type="glycosylation site" description="N-linked (GlcNAc...) asparagine" evidence="1">
    <location>
        <position position="134"/>
    </location>
</feature>
<feature type="glycosylation site" description="N-linked (GlcNAc...) asparagine" evidence="1">
    <location>
        <position position="234"/>
    </location>
</feature>
<feature type="glycosylation site" description="N-linked (GlcNAc...) asparagine" evidence="1">
    <location>
        <position position="250"/>
    </location>
</feature>
<feature type="glycosylation site" description="N-linked (GlcNAc...) asparagine" evidence="1">
    <location>
        <position position="284"/>
    </location>
</feature>
<feature type="glycosylation site" description="N-linked (GlcNAc...) asparagine" evidence="1">
    <location>
        <position position="333"/>
    </location>
</feature>
<feature type="glycosylation site" description="N-linked (GlcNAc...) asparagine" evidence="1">
    <location>
        <position position="357"/>
    </location>
</feature>
<feature type="glycosylation site" description="N-linked (GlcNAc...) asparagine" evidence="1">
    <location>
        <position position="367"/>
    </location>
</feature>
<sequence>MKILILSFFLILGINLVFCQSSISLSATIYDQSPARNPDFEIPNAPNAVVKNMVLSTLGADKTPTYCCGDNGVYYNGQFDIHSQSTFDSWFHEIEGISYAVPYELVLIESKDEPGIYVYTSSSFFPIDGKGFDNKTLYPDEITYNGHNYHFCMKIHSSFTYHGGEYFTFAGDDDVWVYFDNNLLIDLGGLHTSASETVYLDNLGLTIGQSFPFDFFYCERHTYESNLNIITNLNLTCIEYDACGVCLGKNDTCCFVNKCETINRCLEADCNEGTNFQCDYHIKNCSDGDICSTDGCDIGFGCINLPINCDDGNYCTKDYCDPTYGCLHIETANCTECLETGCITVLPCFPVTCDSLNSSHCVASAMNCSDNDPCTSTECVNGECTYEWICGSEDSSSGVVDSSSGVVDSSSDVIDSSDIIIDSSSDIPIPTLSPSPQPSRFPTDTPTNTPMPPTRPPTPTEDPKIYEDPEDLDKDCLHCKDLGCILTGKSCGYLKNEKYEKSNCKENCCSHTPTCF</sequence>